<sequence length="428" mass="46196">MSAIVDVIAREIIDSRGNPTIEADVLLESGVLGRASVPSGASVGTREAVELRDGDTQRYYGKGVLKAVENVNGEISEEIMGLDATEQCFIDKTLIELDGSENKSRLGANAILAVSLAVAKAAAEESSLPLYRYLGGTNSKWLPVPMMNLINGGVHANNRLDMQEFMIIPLGLPSLREAVRCGAEVFGKLRTLLHKKNLPTTVGDEGGFAPGFAHNEEALGLIVQAIDEAGYQPGSEVAIGVDCASSEFFRDGKYHLAVDGLSLTSAQFIDYLASWVEKYPIISIEDGISEQDWDGWKLLTERLGQTVQLVGDDIFATNTKILKKGINRNIANSILIKINQIGTLTETLNAIEMAKCAGYTAVVSHRSGETEDTMIADIAVGTNALQIKTGSLSRSDRLAKYNQLLRIEEDLGDVAQYAGRSAFYQLKP</sequence>
<evidence type="ECO:0000255" key="1">
    <source>
        <dbReference type="HAMAP-Rule" id="MF_00318"/>
    </source>
</evidence>
<reference key="1">
    <citation type="journal article" date="2007" name="Environ. Microbiol.">
        <title>Whole-genome analysis of the ammonia-oxidizing bacterium, Nitrosomonas eutropha C91: implications for niche adaptation.</title>
        <authorList>
            <person name="Stein L.Y."/>
            <person name="Arp D.J."/>
            <person name="Berube P.M."/>
            <person name="Chain P.S."/>
            <person name="Hauser L."/>
            <person name="Jetten M.S."/>
            <person name="Klotz M.G."/>
            <person name="Larimer F.W."/>
            <person name="Norton J.M."/>
            <person name="Op den Camp H.J.M."/>
            <person name="Shin M."/>
            <person name="Wei X."/>
        </authorList>
    </citation>
    <scope>NUCLEOTIDE SEQUENCE [LARGE SCALE GENOMIC DNA]</scope>
    <source>
        <strain>DSM 101675 / C91 / Nm57</strain>
    </source>
</reference>
<organism>
    <name type="scientific">Nitrosomonas eutropha (strain DSM 101675 / C91 / Nm57)</name>
    <dbReference type="NCBI Taxonomy" id="335283"/>
    <lineage>
        <taxon>Bacteria</taxon>
        <taxon>Pseudomonadati</taxon>
        <taxon>Pseudomonadota</taxon>
        <taxon>Betaproteobacteria</taxon>
        <taxon>Nitrosomonadales</taxon>
        <taxon>Nitrosomonadaceae</taxon>
        <taxon>Nitrosomonas</taxon>
    </lineage>
</organism>
<proteinExistence type="inferred from homology"/>
<comment type="function">
    <text evidence="1">Catalyzes the reversible conversion of 2-phosphoglycerate (2-PG) into phosphoenolpyruvate (PEP). It is essential for the degradation of carbohydrates via glycolysis.</text>
</comment>
<comment type="catalytic activity">
    <reaction evidence="1">
        <text>(2R)-2-phosphoglycerate = phosphoenolpyruvate + H2O</text>
        <dbReference type="Rhea" id="RHEA:10164"/>
        <dbReference type="ChEBI" id="CHEBI:15377"/>
        <dbReference type="ChEBI" id="CHEBI:58289"/>
        <dbReference type="ChEBI" id="CHEBI:58702"/>
        <dbReference type="EC" id="4.2.1.11"/>
    </reaction>
</comment>
<comment type="cofactor">
    <cofactor evidence="1">
        <name>Mg(2+)</name>
        <dbReference type="ChEBI" id="CHEBI:18420"/>
    </cofactor>
    <text evidence="1">Binds a second Mg(2+) ion via substrate during catalysis.</text>
</comment>
<comment type="pathway">
    <text evidence="1">Carbohydrate degradation; glycolysis; pyruvate from D-glyceraldehyde 3-phosphate: step 4/5.</text>
</comment>
<comment type="subcellular location">
    <subcellularLocation>
        <location evidence="1">Cytoplasm</location>
    </subcellularLocation>
    <subcellularLocation>
        <location evidence="1">Secreted</location>
    </subcellularLocation>
    <subcellularLocation>
        <location evidence="1">Cell surface</location>
    </subcellularLocation>
    <text evidence="1">Fractions of enolase are present in both the cytoplasm and on the cell surface.</text>
</comment>
<comment type="similarity">
    <text evidence="1">Belongs to the enolase family.</text>
</comment>
<keyword id="KW-0963">Cytoplasm</keyword>
<keyword id="KW-0324">Glycolysis</keyword>
<keyword id="KW-0456">Lyase</keyword>
<keyword id="KW-0460">Magnesium</keyword>
<keyword id="KW-0479">Metal-binding</keyword>
<keyword id="KW-0964">Secreted</keyword>
<name>ENO_NITEC</name>
<feature type="chain" id="PRO_0000280867" description="Enolase">
    <location>
        <begin position="1"/>
        <end position="428"/>
    </location>
</feature>
<feature type="active site" description="Proton donor" evidence="1">
    <location>
        <position position="205"/>
    </location>
</feature>
<feature type="active site" description="Proton acceptor" evidence="1">
    <location>
        <position position="337"/>
    </location>
</feature>
<feature type="binding site" evidence="1">
    <location>
        <position position="163"/>
    </location>
    <ligand>
        <name>(2R)-2-phosphoglycerate</name>
        <dbReference type="ChEBI" id="CHEBI:58289"/>
    </ligand>
</feature>
<feature type="binding site" evidence="1">
    <location>
        <position position="242"/>
    </location>
    <ligand>
        <name>Mg(2+)</name>
        <dbReference type="ChEBI" id="CHEBI:18420"/>
    </ligand>
</feature>
<feature type="binding site" evidence="1">
    <location>
        <position position="285"/>
    </location>
    <ligand>
        <name>Mg(2+)</name>
        <dbReference type="ChEBI" id="CHEBI:18420"/>
    </ligand>
</feature>
<feature type="binding site" evidence="1">
    <location>
        <position position="312"/>
    </location>
    <ligand>
        <name>Mg(2+)</name>
        <dbReference type="ChEBI" id="CHEBI:18420"/>
    </ligand>
</feature>
<feature type="binding site" evidence="1">
    <location>
        <position position="337"/>
    </location>
    <ligand>
        <name>(2R)-2-phosphoglycerate</name>
        <dbReference type="ChEBI" id="CHEBI:58289"/>
    </ligand>
</feature>
<feature type="binding site" evidence="1">
    <location>
        <position position="366"/>
    </location>
    <ligand>
        <name>(2R)-2-phosphoglycerate</name>
        <dbReference type="ChEBI" id="CHEBI:58289"/>
    </ligand>
</feature>
<feature type="binding site" evidence="1">
    <location>
        <position position="367"/>
    </location>
    <ligand>
        <name>(2R)-2-phosphoglycerate</name>
        <dbReference type="ChEBI" id="CHEBI:58289"/>
    </ligand>
</feature>
<feature type="binding site" evidence="1">
    <location>
        <position position="388"/>
    </location>
    <ligand>
        <name>(2R)-2-phosphoglycerate</name>
        <dbReference type="ChEBI" id="CHEBI:58289"/>
    </ligand>
</feature>
<dbReference type="EC" id="4.2.1.11" evidence="1"/>
<dbReference type="EMBL" id="CP000450">
    <property type="protein sequence ID" value="ABI60689.1"/>
    <property type="molecule type" value="Genomic_DNA"/>
</dbReference>
<dbReference type="RefSeq" id="WP_011635450.1">
    <property type="nucleotide sequence ID" value="NC_008344.1"/>
</dbReference>
<dbReference type="SMR" id="Q0AD93"/>
<dbReference type="STRING" id="335283.Neut_2482"/>
<dbReference type="KEGG" id="net:Neut_2482"/>
<dbReference type="eggNOG" id="COG0148">
    <property type="taxonomic scope" value="Bacteria"/>
</dbReference>
<dbReference type="HOGENOM" id="CLU_031223_2_1_4"/>
<dbReference type="OrthoDB" id="9804716at2"/>
<dbReference type="UniPathway" id="UPA00109">
    <property type="reaction ID" value="UER00187"/>
</dbReference>
<dbReference type="Proteomes" id="UP000001966">
    <property type="component" value="Chromosome"/>
</dbReference>
<dbReference type="GO" id="GO:0009986">
    <property type="term" value="C:cell surface"/>
    <property type="evidence" value="ECO:0007669"/>
    <property type="project" value="UniProtKB-SubCell"/>
</dbReference>
<dbReference type="GO" id="GO:0005576">
    <property type="term" value="C:extracellular region"/>
    <property type="evidence" value="ECO:0007669"/>
    <property type="project" value="UniProtKB-SubCell"/>
</dbReference>
<dbReference type="GO" id="GO:0000015">
    <property type="term" value="C:phosphopyruvate hydratase complex"/>
    <property type="evidence" value="ECO:0007669"/>
    <property type="project" value="InterPro"/>
</dbReference>
<dbReference type="GO" id="GO:0000287">
    <property type="term" value="F:magnesium ion binding"/>
    <property type="evidence" value="ECO:0007669"/>
    <property type="project" value="UniProtKB-UniRule"/>
</dbReference>
<dbReference type="GO" id="GO:0004634">
    <property type="term" value="F:phosphopyruvate hydratase activity"/>
    <property type="evidence" value="ECO:0007669"/>
    <property type="project" value="UniProtKB-UniRule"/>
</dbReference>
<dbReference type="GO" id="GO:0006096">
    <property type="term" value="P:glycolytic process"/>
    <property type="evidence" value="ECO:0007669"/>
    <property type="project" value="UniProtKB-UniRule"/>
</dbReference>
<dbReference type="CDD" id="cd03313">
    <property type="entry name" value="enolase"/>
    <property type="match status" value="1"/>
</dbReference>
<dbReference type="FunFam" id="3.20.20.120:FF:000001">
    <property type="entry name" value="Enolase"/>
    <property type="match status" value="1"/>
</dbReference>
<dbReference type="FunFam" id="3.30.390.10:FF:000001">
    <property type="entry name" value="Enolase"/>
    <property type="match status" value="1"/>
</dbReference>
<dbReference type="Gene3D" id="3.20.20.120">
    <property type="entry name" value="Enolase-like C-terminal domain"/>
    <property type="match status" value="1"/>
</dbReference>
<dbReference type="Gene3D" id="3.30.390.10">
    <property type="entry name" value="Enolase-like, N-terminal domain"/>
    <property type="match status" value="1"/>
</dbReference>
<dbReference type="HAMAP" id="MF_00318">
    <property type="entry name" value="Enolase"/>
    <property type="match status" value="1"/>
</dbReference>
<dbReference type="InterPro" id="IPR000941">
    <property type="entry name" value="Enolase"/>
</dbReference>
<dbReference type="InterPro" id="IPR036849">
    <property type="entry name" value="Enolase-like_C_sf"/>
</dbReference>
<dbReference type="InterPro" id="IPR029017">
    <property type="entry name" value="Enolase-like_N"/>
</dbReference>
<dbReference type="InterPro" id="IPR020810">
    <property type="entry name" value="Enolase_C"/>
</dbReference>
<dbReference type="InterPro" id="IPR020809">
    <property type="entry name" value="Enolase_CS"/>
</dbReference>
<dbReference type="InterPro" id="IPR020811">
    <property type="entry name" value="Enolase_N"/>
</dbReference>
<dbReference type="NCBIfam" id="TIGR01060">
    <property type="entry name" value="eno"/>
    <property type="match status" value="1"/>
</dbReference>
<dbReference type="PANTHER" id="PTHR11902">
    <property type="entry name" value="ENOLASE"/>
    <property type="match status" value="1"/>
</dbReference>
<dbReference type="PANTHER" id="PTHR11902:SF1">
    <property type="entry name" value="ENOLASE"/>
    <property type="match status" value="1"/>
</dbReference>
<dbReference type="Pfam" id="PF00113">
    <property type="entry name" value="Enolase_C"/>
    <property type="match status" value="1"/>
</dbReference>
<dbReference type="Pfam" id="PF03952">
    <property type="entry name" value="Enolase_N"/>
    <property type="match status" value="1"/>
</dbReference>
<dbReference type="PIRSF" id="PIRSF001400">
    <property type="entry name" value="Enolase"/>
    <property type="match status" value="1"/>
</dbReference>
<dbReference type="PRINTS" id="PR00148">
    <property type="entry name" value="ENOLASE"/>
</dbReference>
<dbReference type="SFLD" id="SFLDF00002">
    <property type="entry name" value="enolase"/>
    <property type="match status" value="1"/>
</dbReference>
<dbReference type="SFLD" id="SFLDG00178">
    <property type="entry name" value="enolase"/>
    <property type="match status" value="1"/>
</dbReference>
<dbReference type="SMART" id="SM01192">
    <property type="entry name" value="Enolase_C"/>
    <property type="match status" value="1"/>
</dbReference>
<dbReference type="SMART" id="SM01193">
    <property type="entry name" value="Enolase_N"/>
    <property type="match status" value="1"/>
</dbReference>
<dbReference type="SUPFAM" id="SSF51604">
    <property type="entry name" value="Enolase C-terminal domain-like"/>
    <property type="match status" value="1"/>
</dbReference>
<dbReference type="SUPFAM" id="SSF54826">
    <property type="entry name" value="Enolase N-terminal domain-like"/>
    <property type="match status" value="1"/>
</dbReference>
<dbReference type="PROSITE" id="PS00164">
    <property type="entry name" value="ENOLASE"/>
    <property type="match status" value="1"/>
</dbReference>
<gene>
    <name evidence="1" type="primary">eno</name>
    <name type="ordered locus">Neut_2482</name>
</gene>
<accession>Q0AD93</accession>
<protein>
    <recommendedName>
        <fullName evidence="1">Enolase</fullName>
        <ecNumber evidence="1">4.2.1.11</ecNumber>
    </recommendedName>
    <alternativeName>
        <fullName evidence="1">2-phospho-D-glycerate hydro-lyase</fullName>
    </alternativeName>
    <alternativeName>
        <fullName evidence="1">2-phosphoglycerate dehydratase</fullName>
    </alternativeName>
</protein>